<comment type="function">
    <text evidence="3">Proton-coupled transporter that transports a wide spectrum of oxo derivatives of heterocyclic nitrogen compounds, including allantoin, uric acid and xanthine, but not adenine. Mediates high affinity transport of uracil and 5-fluorouracil (a toxic uracil analog). Mediates transport of free pyrimidines and may function during early seedling development in salvage pathways, by the utilization of pyrimidines from seed storage tissue.</text>
</comment>
<comment type="biophysicochemical properties">
    <kinetics>
        <KM evidence="3">26 uM for allantoin</KM>
        <KM evidence="3">6.2 uM for uracil</KM>
        <KM evidence="4">24 uM for xanthine</KM>
    </kinetics>
</comment>
<comment type="subcellular location">
    <subcellularLocation>
        <location evidence="1">Membrane</location>
        <topology evidence="1">Multi-pass membrane protein</topology>
    </subcellularLocation>
</comment>
<comment type="tissue specificity">
    <text evidence="3 4">Expressed in root xylem, cotyledons and leaves (PubMed:15308648). Expressed in leaf blades, petioles, trichomes, stems, flower stigma, the upper part of pedicels, sepals, and the top and bottom parts of carpels in siliques (PubMed:16738859).</text>
</comment>
<comment type="developmental stage">
    <text evidence="3">During seedling development, expression is hardly detected during the first 2 days after imbibition, and then increases to reach a peak after 9 days.</text>
</comment>
<comment type="similarity">
    <text evidence="6">Belongs to the plant ureide permease (TC 2.A.7.19) family.</text>
</comment>
<comment type="sequence caution" evidence="6">
    <conflict type="erroneous initiation">
        <sequence resource="EMBL-CDS" id="AAD17424"/>
    </conflict>
    <text>Truncated N-terminus.</text>
</comment>
<feature type="chain" id="PRO_0000221646" description="Ureide permease 2">
    <location>
        <begin position="1"/>
        <end position="398"/>
    </location>
</feature>
<feature type="topological domain" description="Extracellular" evidence="1">
    <location>
        <begin position="1"/>
        <end position="10"/>
    </location>
</feature>
<feature type="transmembrane region" description="Helical" evidence="1">
    <location>
        <begin position="11"/>
        <end position="31"/>
    </location>
</feature>
<feature type="topological domain" description="Cytoplasmic" evidence="1">
    <location>
        <begin position="32"/>
        <end position="44"/>
    </location>
</feature>
<feature type="transmembrane region" description="Helical" evidence="1">
    <location>
        <begin position="45"/>
        <end position="65"/>
    </location>
</feature>
<feature type="topological domain" description="Extracellular" evidence="1">
    <location>
        <begin position="66"/>
        <end position="81"/>
    </location>
</feature>
<feature type="transmembrane region" description="Helical" evidence="1">
    <location>
        <begin position="82"/>
        <end position="102"/>
    </location>
</feature>
<feature type="topological domain" description="Cytoplasmic" evidence="1">
    <location>
        <begin position="103"/>
        <end position="104"/>
    </location>
</feature>
<feature type="transmembrane region" description="Helical" evidence="1">
    <location>
        <begin position="105"/>
        <end position="125"/>
    </location>
</feature>
<feature type="topological domain" description="Extracellular" evidence="1">
    <location>
        <begin position="126"/>
        <end position="139"/>
    </location>
</feature>
<feature type="transmembrane region" description="Helical" evidence="1">
    <location>
        <begin position="140"/>
        <end position="160"/>
    </location>
</feature>
<feature type="topological domain" description="Cytoplasmic" evidence="1">
    <location>
        <begin position="161"/>
        <end position="229"/>
    </location>
</feature>
<feature type="transmembrane region" description="Helical" evidence="1">
    <location>
        <begin position="230"/>
        <end position="250"/>
    </location>
</feature>
<feature type="topological domain" description="Extracellular" evidence="1">
    <location>
        <begin position="251"/>
        <end position="272"/>
    </location>
</feature>
<feature type="transmembrane region" description="Helical" evidence="1">
    <location>
        <begin position="273"/>
        <end position="293"/>
    </location>
</feature>
<feature type="topological domain" description="Cytoplasmic" evidence="1">
    <location>
        <begin position="294"/>
        <end position="315"/>
    </location>
</feature>
<feature type="transmembrane region" description="Helical" evidence="1">
    <location>
        <begin position="316"/>
        <end position="336"/>
    </location>
</feature>
<feature type="topological domain" description="Extracellular" evidence="1">
    <location>
        <begin position="337"/>
        <end position="341"/>
    </location>
</feature>
<feature type="transmembrane region" description="Helical" evidence="1">
    <location>
        <begin position="342"/>
        <end position="362"/>
    </location>
</feature>
<feature type="topological domain" description="Cytoplasmic" evidence="1">
    <location>
        <begin position="363"/>
        <end position="371"/>
    </location>
</feature>
<feature type="transmembrane region" description="Helical" evidence="1">
    <location>
        <begin position="372"/>
        <end position="392"/>
    </location>
</feature>
<feature type="topological domain" description="Extracellular" evidence="1">
    <location>
        <begin position="393"/>
        <end position="398"/>
    </location>
</feature>
<feature type="region of interest" description="Disordered" evidence="2">
    <location>
        <begin position="176"/>
        <end position="200"/>
    </location>
</feature>
<feature type="compositionally biased region" description="Polar residues" evidence="2">
    <location>
        <begin position="183"/>
        <end position="200"/>
    </location>
</feature>
<feature type="binding site" evidence="1">
    <location>
        <begin position="221"/>
        <end position="228"/>
    </location>
    <ligand>
        <name>ATP</name>
        <dbReference type="ChEBI" id="CHEBI:30616"/>
    </ligand>
</feature>
<accession>Q9ZQ89</accession>
<organism>
    <name type="scientific">Arabidopsis thaliana</name>
    <name type="common">Mouse-ear cress</name>
    <dbReference type="NCBI Taxonomy" id="3702"/>
    <lineage>
        <taxon>Eukaryota</taxon>
        <taxon>Viridiplantae</taxon>
        <taxon>Streptophyta</taxon>
        <taxon>Embryophyta</taxon>
        <taxon>Tracheophyta</taxon>
        <taxon>Spermatophyta</taxon>
        <taxon>Magnoliopsida</taxon>
        <taxon>eudicotyledons</taxon>
        <taxon>Gunneridae</taxon>
        <taxon>Pentapetalae</taxon>
        <taxon>rosids</taxon>
        <taxon>malvids</taxon>
        <taxon>Brassicales</taxon>
        <taxon>Brassicaceae</taxon>
        <taxon>Camelineae</taxon>
        <taxon>Arabidopsis</taxon>
    </lineage>
</organism>
<sequence length="398" mass="43542">MYLVESKGGAIACMLLALLSLGTWPAVLTLLERRGRLPQHTYLDYSITNLLAAIIIAFTFGQIGSTKPDSPNFITQLAQDNWPSVMFAMAGGIVLSLGNLSTQYAWALVGLSVTEVITSSITVVIGSTLNYFLDDKINKAEILFPGVACFLIAVCLGSAVHRSNADDNKAKLRDFETAKQEASGPSTEIGTNSSKDLETNVTTKPKEGTARFLIELENTRAIKVFGKRKIIGLAITFFAGLCFSLFSPAFNLATNDQWNRLKQGVPKLVVYTAFFYFSVSCFIIALILNVVFLYYPVLGLPKSSFKAYLNDWNGRYWAFLAGFLCGFGNGLQFMGGQAAGYAAADSVQALPLVSTFWGVVLFGEYRRSSRKTYLLLFCMLFMFISAVAVLMASSGHRK</sequence>
<dbReference type="EMBL" id="AC006284">
    <property type="protein sequence ID" value="AAD17424.1"/>
    <property type="status" value="ALT_INIT"/>
    <property type="molecule type" value="Genomic_DNA"/>
</dbReference>
<dbReference type="EMBL" id="CP002685">
    <property type="protein sequence ID" value="AEC05711.1"/>
    <property type="molecule type" value="Genomic_DNA"/>
</dbReference>
<dbReference type="EMBL" id="CP002685">
    <property type="protein sequence ID" value="AEC05712.1"/>
    <property type="molecule type" value="Genomic_DNA"/>
</dbReference>
<dbReference type="PIR" id="E84449">
    <property type="entry name" value="E84449"/>
</dbReference>
<dbReference type="RefSeq" id="NP_001077874.1">
    <property type="nucleotide sequence ID" value="NM_001084405.2"/>
</dbReference>
<dbReference type="RefSeq" id="NP_178451.2">
    <property type="nucleotide sequence ID" value="NM_126403.4"/>
</dbReference>
<dbReference type="FunCoup" id="Q9ZQ89">
    <property type="interactions" value="13"/>
</dbReference>
<dbReference type="STRING" id="3702.Q9ZQ89"/>
<dbReference type="TCDB" id="2.A.7.19.4">
    <property type="family name" value="the drug/metabolite transporter (dmt) superfamily"/>
</dbReference>
<dbReference type="iPTMnet" id="Q9ZQ89"/>
<dbReference type="PaxDb" id="3702-AT2G03530.2"/>
<dbReference type="ProteomicsDB" id="242327"/>
<dbReference type="EnsemblPlants" id="AT2G03530.1">
    <property type="protein sequence ID" value="AT2G03530.1"/>
    <property type="gene ID" value="AT2G03530"/>
</dbReference>
<dbReference type="EnsemblPlants" id="AT2G03530.2">
    <property type="protein sequence ID" value="AT2G03530.2"/>
    <property type="gene ID" value="AT2G03530"/>
</dbReference>
<dbReference type="GeneID" id="814882"/>
<dbReference type="Gramene" id="AT2G03530.1">
    <property type="protein sequence ID" value="AT2G03530.1"/>
    <property type="gene ID" value="AT2G03530"/>
</dbReference>
<dbReference type="Gramene" id="AT2G03530.2">
    <property type="protein sequence ID" value="AT2G03530.2"/>
    <property type="gene ID" value="AT2G03530"/>
</dbReference>
<dbReference type="KEGG" id="ath:AT2G03530"/>
<dbReference type="Araport" id="AT2G03530"/>
<dbReference type="TAIR" id="AT2G03530">
    <property type="gene designation" value="UPS2"/>
</dbReference>
<dbReference type="eggNOG" id="ENOG502QUAA">
    <property type="taxonomic scope" value="Eukaryota"/>
</dbReference>
<dbReference type="HOGENOM" id="CLU_051261_0_0_1"/>
<dbReference type="InParanoid" id="Q9ZQ89"/>
<dbReference type="OMA" id="IFLPSEW"/>
<dbReference type="PhylomeDB" id="Q9ZQ89"/>
<dbReference type="SABIO-RK" id="Q9ZQ89"/>
<dbReference type="PRO" id="PR:Q9ZQ89"/>
<dbReference type="Proteomes" id="UP000006548">
    <property type="component" value="Chromosome 2"/>
</dbReference>
<dbReference type="ExpressionAtlas" id="Q9ZQ89">
    <property type="expression patterns" value="baseline and differential"/>
</dbReference>
<dbReference type="GO" id="GO:0016020">
    <property type="term" value="C:membrane"/>
    <property type="evidence" value="ECO:0007669"/>
    <property type="project" value="UniProtKB-SubCell"/>
</dbReference>
<dbReference type="GO" id="GO:0005274">
    <property type="term" value="F:allantoin:proton symporter activity"/>
    <property type="evidence" value="ECO:0000314"/>
    <property type="project" value="UniProtKB"/>
</dbReference>
<dbReference type="GO" id="GO:0005524">
    <property type="term" value="F:ATP binding"/>
    <property type="evidence" value="ECO:0007669"/>
    <property type="project" value="UniProtKB-KW"/>
</dbReference>
<dbReference type="GO" id="GO:0015210">
    <property type="term" value="F:uracil transmembrane transporter activity"/>
    <property type="evidence" value="ECO:0000314"/>
    <property type="project" value="UniProtKB"/>
</dbReference>
<dbReference type="GO" id="GO:0015720">
    <property type="term" value="P:allantoin transport"/>
    <property type="evidence" value="ECO:0000314"/>
    <property type="project" value="UniProtKB"/>
</dbReference>
<dbReference type="GO" id="GO:0043100">
    <property type="term" value="P:pyrimidine nucleobase salvage"/>
    <property type="evidence" value="ECO:0000304"/>
    <property type="project" value="UniProtKB"/>
</dbReference>
<dbReference type="GO" id="GO:0015857">
    <property type="term" value="P:uracil transport"/>
    <property type="evidence" value="ECO:0000314"/>
    <property type="project" value="UniProtKB"/>
</dbReference>
<dbReference type="InterPro" id="IPR030189">
    <property type="entry name" value="UPS_plant"/>
</dbReference>
<dbReference type="InterPro" id="IPR009834">
    <property type="entry name" value="Ureide_permease"/>
</dbReference>
<dbReference type="PANTHER" id="PTHR31081:SF5">
    <property type="entry name" value="UREIDE PERMEASE 1-RELATED"/>
    <property type="match status" value="1"/>
</dbReference>
<dbReference type="PANTHER" id="PTHR31081">
    <property type="entry name" value="UREIDE PERMEASE 1-RELATED-RELATED"/>
    <property type="match status" value="1"/>
</dbReference>
<dbReference type="Pfam" id="PF07168">
    <property type="entry name" value="Ureide_permease"/>
    <property type="match status" value="1"/>
</dbReference>
<proteinExistence type="evidence at protein level"/>
<evidence type="ECO:0000255" key="1"/>
<evidence type="ECO:0000256" key="2">
    <source>
        <dbReference type="SAM" id="MobiDB-lite"/>
    </source>
</evidence>
<evidence type="ECO:0000269" key="3">
    <source>
    </source>
</evidence>
<evidence type="ECO:0000269" key="4">
    <source>
    </source>
</evidence>
<evidence type="ECO:0000303" key="5">
    <source>
    </source>
</evidence>
<evidence type="ECO:0000305" key="6"/>
<evidence type="ECO:0000312" key="7">
    <source>
        <dbReference type="Araport" id="AT2G03530"/>
    </source>
</evidence>
<evidence type="ECO:0000312" key="8">
    <source>
        <dbReference type="EMBL" id="AAD17424.1"/>
    </source>
</evidence>
<reference key="1">
    <citation type="journal article" date="1999" name="Nature">
        <title>Sequence and analysis of chromosome 2 of the plant Arabidopsis thaliana.</title>
        <authorList>
            <person name="Lin X."/>
            <person name="Kaul S."/>
            <person name="Rounsley S.D."/>
            <person name="Shea T.P."/>
            <person name="Benito M.-I."/>
            <person name="Town C.D."/>
            <person name="Fujii C.Y."/>
            <person name="Mason T.M."/>
            <person name="Bowman C.L."/>
            <person name="Barnstead M.E."/>
            <person name="Feldblyum T.V."/>
            <person name="Buell C.R."/>
            <person name="Ketchum K.A."/>
            <person name="Lee J.J."/>
            <person name="Ronning C.M."/>
            <person name="Koo H.L."/>
            <person name="Moffat K.S."/>
            <person name="Cronin L.A."/>
            <person name="Shen M."/>
            <person name="Pai G."/>
            <person name="Van Aken S."/>
            <person name="Umayam L."/>
            <person name="Tallon L.J."/>
            <person name="Gill J.E."/>
            <person name="Adams M.D."/>
            <person name="Carrera A.J."/>
            <person name="Creasy T.H."/>
            <person name="Goodman H.M."/>
            <person name="Somerville C.R."/>
            <person name="Copenhaver G.P."/>
            <person name="Preuss D."/>
            <person name="Nierman W.C."/>
            <person name="White O."/>
            <person name="Eisen J.A."/>
            <person name="Salzberg S.L."/>
            <person name="Fraser C.M."/>
            <person name="Venter J.C."/>
        </authorList>
    </citation>
    <scope>NUCLEOTIDE SEQUENCE [LARGE SCALE GENOMIC DNA]</scope>
    <source>
        <strain>cv. Columbia</strain>
    </source>
</reference>
<reference key="2">
    <citation type="journal article" date="2017" name="Plant J.">
        <title>Araport11: a complete reannotation of the Arabidopsis thaliana reference genome.</title>
        <authorList>
            <person name="Cheng C.Y."/>
            <person name="Krishnakumar V."/>
            <person name="Chan A.P."/>
            <person name="Thibaud-Nissen F."/>
            <person name="Schobel S."/>
            <person name="Town C.D."/>
        </authorList>
    </citation>
    <scope>GENOME REANNOTATION</scope>
    <source>
        <strain>cv. Columbia</strain>
    </source>
</reference>
<reference key="3">
    <citation type="journal article" date="2002" name="Plant Cell">
        <title>A novel superfamily of transporters for allantoin and other oxo derivatives of nitrogen heterocyclic compounds in Arabidopsis.</title>
        <authorList>
            <person name="Desimone M."/>
            <person name="Catoni E."/>
            <person name="Ludewig U."/>
            <person name="Hilpert M."/>
            <person name="Schneider A."/>
            <person name="Kunze R."/>
            <person name="Tegeder M."/>
            <person name="Frommer W.B."/>
            <person name="Schumacher K."/>
        </authorList>
    </citation>
    <scope>GENE FAMILY</scope>
    <scope>NOMENCLATURE</scope>
</reference>
<reference key="4">
    <citation type="journal article" date="2004" name="J. Biol. Chem.">
        <title>UPS1 and UPS2 from Arabidopsis mediate high affinity transport of uracil and 5-fluorouracil.</title>
        <authorList>
            <person name="Schmidt A."/>
            <person name="Su Y.H."/>
            <person name="Kunze R."/>
            <person name="Warner S."/>
            <person name="Hewitt M."/>
            <person name="Slocum R.D."/>
            <person name="Ludewig U."/>
            <person name="Frommer W.B."/>
            <person name="Desimone M."/>
        </authorList>
    </citation>
    <scope>FUNCTION</scope>
    <scope>BIOPHYSICOCHEMICAL PROPERTIES</scope>
    <scope>TISSUE SPECIFICITY</scope>
    <scope>DEVELOPMENTAL STAGE</scope>
</reference>
<reference key="5">
    <citation type="journal article" date="2006" name="Planta">
        <title>Comparative studies on Ureide Permeases in Arabidopsis thaliana and analysis of two alternative splice variants of AtUPS5.</title>
        <authorList>
            <person name="Schmidt A."/>
            <person name="Baumann N."/>
            <person name="Schwarzkopf A."/>
            <person name="Frommer W.B."/>
            <person name="Desimone M."/>
        </authorList>
    </citation>
    <scope>BIOPHYSICOCHEMICAL PROPERTIES</scope>
    <scope>TISSUE SPECIFICITY</scope>
</reference>
<keyword id="KW-0067">ATP-binding</keyword>
<keyword id="KW-0472">Membrane</keyword>
<keyword id="KW-0547">Nucleotide-binding</keyword>
<keyword id="KW-1185">Reference proteome</keyword>
<keyword id="KW-0812">Transmembrane</keyword>
<keyword id="KW-1133">Transmembrane helix</keyword>
<keyword id="KW-0813">Transport</keyword>
<gene>
    <name evidence="5" type="primary">UPS2</name>
    <name evidence="7" type="ordered locus">At2g03530</name>
    <name evidence="8" type="ORF">T4M8.3</name>
</gene>
<protein>
    <recommendedName>
        <fullName evidence="5">Ureide permease 2</fullName>
        <shortName evidence="5">AtUPS2</shortName>
    </recommendedName>
</protein>
<name>UPS2_ARATH</name>